<keyword id="KW-1185">Reference proteome</keyword>
<comment type="similarity">
    <text evidence="2">Belongs to the NPIP family.</text>
</comment>
<dbReference type="EMBL" id="AC145285">
    <property type="status" value="NOT_ANNOTATED_CDS"/>
    <property type="molecule type" value="Genomic_DNA"/>
</dbReference>
<dbReference type="RefSeq" id="NP_001274179.1">
    <property type="nucleotide sequence ID" value="NM_001287250.3"/>
</dbReference>
<dbReference type="RefSeq" id="XP_003118767.2">
    <property type="nucleotide sequence ID" value="XM_003118719.7"/>
</dbReference>
<dbReference type="BioGRID" id="1529096">
    <property type="interactions" value="2"/>
</dbReference>
<dbReference type="FunCoup" id="F8W1W9">
    <property type="interactions" value="21"/>
</dbReference>
<dbReference type="STRING" id="9606.ENSP00000446902"/>
<dbReference type="BioMuta" id="NPIPB9"/>
<dbReference type="MassIVE" id="F8W1W9"/>
<dbReference type="PaxDb" id="9606-ENSP00000446902"/>
<dbReference type="Ensembl" id="ENST00000357796.8">
    <property type="protein sequence ID" value="ENSP00000350444.4"/>
    <property type="gene ID" value="ENSG00000196993.9"/>
</dbReference>
<dbReference type="GeneID" id="100507607"/>
<dbReference type="KEGG" id="hsa:100507607"/>
<dbReference type="MANE-Select" id="ENST00000357796.8">
    <property type="protein sequence ID" value="ENSP00000350444.4"/>
    <property type="RefSeq nucleotide sequence ID" value="NM_001287250.3"/>
    <property type="RefSeq protein sequence ID" value="NP_001274179.1"/>
</dbReference>
<dbReference type="UCSC" id="uc010vcz.4">
    <property type="organism name" value="human"/>
</dbReference>
<dbReference type="AGR" id="HGNC:41987"/>
<dbReference type="CTD" id="100507607"/>
<dbReference type="GeneCards" id="NPIPB9"/>
<dbReference type="HGNC" id="HGNC:41987">
    <property type="gene designation" value="NPIPB9"/>
</dbReference>
<dbReference type="neXtProt" id="NX_F8W1W9"/>
<dbReference type="VEuPathDB" id="HostDB:ENSG00000196993"/>
<dbReference type="eggNOG" id="ENOG502TDBV">
    <property type="taxonomic scope" value="Eukaryota"/>
</dbReference>
<dbReference type="GeneTree" id="ENSGT00540000072033"/>
<dbReference type="HOGENOM" id="CLU_059939_0_0_1"/>
<dbReference type="InParanoid" id="F8W1W9"/>
<dbReference type="OrthoDB" id="9470913at2759"/>
<dbReference type="PAN-GO" id="F8W1W9">
    <property type="GO annotations" value="1 GO annotation based on evolutionary models"/>
</dbReference>
<dbReference type="PhylomeDB" id="F8W1W9"/>
<dbReference type="TreeFam" id="TF333389"/>
<dbReference type="SignaLink" id="F8W1W9"/>
<dbReference type="BioGRID-ORCS" id="100507607">
    <property type="hits" value="24 hits in 171 CRISPR screens"/>
</dbReference>
<dbReference type="ChiTaRS" id="NPIPB9">
    <property type="organism name" value="human"/>
</dbReference>
<dbReference type="GenomeRNAi" id="100507607"/>
<dbReference type="Pharos" id="F8W1W9">
    <property type="development level" value="Tdark"/>
</dbReference>
<dbReference type="PRO" id="PR:F8W1W9"/>
<dbReference type="Proteomes" id="UP000005640">
    <property type="component" value="Chromosome 16"/>
</dbReference>
<dbReference type="RNAct" id="F8W1W9">
    <property type="molecule type" value="protein"/>
</dbReference>
<dbReference type="Bgee" id="ENSG00000196993">
    <property type="expression patterns" value="Expressed in male germ line stem cell (sensu Vertebrata) in testis and 101 other cell types or tissues"/>
</dbReference>
<dbReference type="ExpressionAtlas" id="F8W1W9">
    <property type="expression patterns" value="baseline and differential"/>
</dbReference>
<dbReference type="InterPro" id="IPR009443">
    <property type="entry name" value="NPIP"/>
</dbReference>
<dbReference type="InterPro" id="IPR054697">
    <property type="entry name" value="NPIP_N"/>
</dbReference>
<dbReference type="PANTHER" id="PTHR15438">
    <property type="entry name" value="NUCLEAR PORE COMPLEX INTERACTING PROTEIN"/>
    <property type="match status" value="1"/>
</dbReference>
<dbReference type="PANTHER" id="PTHR15438:SF4">
    <property type="entry name" value="NUCLEAR PORE COMPLEX-INTERACTING PROTEIN FAMILY MEMBER B15-RELATED"/>
    <property type="match status" value="1"/>
</dbReference>
<dbReference type="Pfam" id="PF06409">
    <property type="entry name" value="NPIP"/>
    <property type="match status" value="1"/>
</dbReference>
<gene>
    <name type="primary">NPIPB9</name>
</gene>
<protein>
    <recommendedName>
        <fullName>Nuclear pore complex-interacting protein family member B9</fullName>
    </recommendedName>
</protein>
<sequence length="432" mass="49734">MVKLSIVLTPQFLSHDQSQFTKELQQHVKSVTCPCEYLRKVINSLAVYRHRETDFGVGVRDHPGQHGKTPSPQKLDNLIIIIIGFLRRYTFNILFCTSCLCVSFLKTIFWSRNGHDGSMDVQQRAWRSNRSRQKGLRSICMHTKKRVSSFRGNKIGLKDVITLRRHVETKVRAKIRKRKVTTKINRHDKINGKRKTARKQKMFQRAQELRRRAEDYHKCKIPPSARKPLCNWVRMAAAEHRHSSGLPYWLYLTAETLKNRMGRQPPPPTQQHSITDNSLSLKTPPECLLTPLPPSVDDNIKECPLAPLPPSPLPPSVDDNLKECLFVPLPPSPLPPSVDDNLKECLFVPLPPSPLPPSVDDNLKTPPLATQEAEVEKPPKPKRWRVDEVEQSPKPKRQREAEAQQLPKPKRRRLSKLRTRHCTQAWAIRINP</sequence>
<name>NPIB9_HUMAN</name>
<organism>
    <name type="scientific">Homo sapiens</name>
    <name type="common">Human</name>
    <dbReference type="NCBI Taxonomy" id="9606"/>
    <lineage>
        <taxon>Eukaryota</taxon>
        <taxon>Metazoa</taxon>
        <taxon>Chordata</taxon>
        <taxon>Craniata</taxon>
        <taxon>Vertebrata</taxon>
        <taxon>Euteleostomi</taxon>
        <taxon>Mammalia</taxon>
        <taxon>Eutheria</taxon>
        <taxon>Euarchontoglires</taxon>
        <taxon>Primates</taxon>
        <taxon>Haplorrhini</taxon>
        <taxon>Catarrhini</taxon>
        <taxon>Hominidae</taxon>
        <taxon>Homo</taxon>
    </lineage>
</organism>
<proteinExistence type="inferred from homology"/>
<reference key="1">
    <citation type="journal article" date="2004" name="Nature">
        <title>The sequence and analysis of duplication-rich human chromosome 16.</title>
        <authorList>
            <person name="Martin J."/>
            <person name="Han C."/>
            <person name="Gordon L.A."/>
            <person name="Terry A."/>
            <person name="Prabhakar S."/>
            <person name="She X."/>
            <person name="Xie G."/>
            <person name="Hellsten U."/>
            <person name="Chan Y.M."/>
            <person name="Altherr M."/>
            <person name="Couronne O."/>
            <person name="Aerts A."/>
            <person name="Bajorek E."/>
            <person name="Black S."/>
            <person name="Blumer H."/>
            <person name="Branscomb E."/>
            <person name="Brown N.C."/>
            <person name="Bruno W.J."/>
            <person name="Buckingham J.M."/>
            <person name="Callen D.F."/>
            <person name="Campbell C.S."/>
            <person name="Campbell M.L."/>
            <person name="Campbell E.W."/>
            <person name="Caoile C."/>
            <person name="Challacombe J.F."/>
            <person name="Chasteen L.A."/>
            <person name="Chertkov O."/>
            <person name="Chi H.C."/>
            <person name="Christensen M."/>
            <person name="Clark L.M."/>
            <person name="Cohn J.D."/>
            <person name="Denys M."/>
            <person name="Detter J.C."/>
            <person name="Dickson M."/>
            <person name="Dimitrijevic-Bussod M."/>
            <person name="Escobar J."/>
            <person name="Fawcett J.J."/>
            <person name="Flowers D."/>
            <person name="Fotopulos D."/>
            <person name="Glavina T."/>
            <person name="Gomez M."/>
            <person name="Gonzales E."/>
            <person name="Goodstein D."/>
            <person name="Goodwin L.A."/>
            <person name="Grady D.L."/>
            <person name="Grigoriev I."/>
            <person name="Groza M."/>
            <person name="Hammon N."/>
            <person name="Hawkins T."/>
            <person name="Haydu L."/>
            <person name="Hildebrand C.E."/>
            <person name="Huang W."/>
            <person name="Israni S."/>
            <person name="Jett J."/>
            <person name="Jewett P.B."/>
            <person name="Kadner K."/>
            <person name="Kimball H."/>
            <person name="Kobayashi A."/>
            <person name="Krawczyk M.-C."/>
            <person name="Leyba T."/>
            <person name="Longmire J.L."/>
            <person name="Lopez F."/>
            <person name="Lou Y."/>
            <person name="Lowry S."/>
            <person name="Ludeman T."/>
            <person name="Manohar C.F."/>
            <person name="Mark G.A."/>
            <person name="McMurray K.L."/>
            <person name="Meincke L.J."/>
            <person name="Morgan J."/>
            <person name="Moyzis R.K."/>
            <person name="Mundt M.O."/>
            <person name="Munk A.C."/>
            <person name="Nandkeshwar R.D."/>
            <person name="Pitluck S."/>
            <person name="Pollard M."/>
            <person name="Predki P."/>
            <person name="Parson-Quintana B."/>
            <person name="Ramirez L."/>
            <person name="Rash S."/>
            <person name="Retterer J."/>
            <person name="Ricke D.O."/>
            <person name="Robinson D.L."/>
            <person name="Rodriguez A."/>
            <person name="Salamov A."/>
            <person name="Saunders E.H."/>
            <person name="Scott D."/>
            <person name="Shough T."/>
            <person name="Stallings R.L."/>
            <person name="Stalvey M."/>
            <person name="Sutherland R.D."/>
            <person name="Tapia R."/>
            <person name="Tesmer J.G."/>
            <person name="Thayer N."/>
            <person name="Thompson L.S."/>
            <person name="Tice H."/>
            <person name="Torney D.C."/>
            <person name="Tran-Gyamfi M."/>
            <person name="Tsai M."/>
            <person name="Ulanovsky L.E."/>
            <person name="Ustaszewska A."/>
            <person name="Vo N."/>
            <person name="White P.S."/>
            <person name="Williams A.L."/>
            <person name="Wills P.L."/>
            <person name="Wu J.-R."/>
            <person name="Wu K."/>
            <person name="Yang J."/>
            <person name="DeJong P."/>
            <person name="Bruce D."/>
            <person name="Doggett N.A."/>
            <person name="Deaven L."/>
            <person name="Schmutz J."/>
            <person name="Grimwood J."/>
            <person name="Richardson P."/>
            <person name="Rokhsar D.S."/>
            <person name="Eichler E.E."/>
            <person name="Gilna P."/>
            <person name="Lucas S.M."/>
            <person name="Myers R.M."/>
            <person name="Rubin E.M."/>
            <person name="Pennacchio L.A."/>
        </authorList>
    </citation>
    <scope>NUCLEOTIDE SEQUENCE [LARGE SCALE GENOMIC DNA]</scope>
</reference>
<feature type="chain" id="PRO_0000423923" description="Nuclear pore complex-interacting protein family member B9">
    <location>
        <begin position="1"/>
        <end position="432"/>
    </location>
</feature>
<feature type="region of interest" description="Disordered" evidence="1">
    <location>
        <begin position="260"/>
        <end position="280"/>
    </location>
</feature>
<feature type="region of interest" description="Disordered" evidence="1">
    <location>
        <begin position="353"/>
        <end position="420"/>
    </location>
</feature>
<feature type="compositionally biased region" description="Polar residues" evidence="1">
    <location>
        <begin position="270"/>
        <end position="280"/>
    </location>
</feature>
<feature type="compositionally biased region" description="Basic and acidic residues" evidence="1">
    <location>
        <begin position="374"/>
        <end position="402"/>
    </location>
</feature>
<feature type="compositionally biased region" description="Basic residues" evidence="1">
    <location>
        <begin position="408"/>
        <end position="420"/>
    </location>
</feature>
<evidence type="ECO:0000256" key="1">
    <source>
        <dbReference type="SAM" id="MobiDB-lite"/>
    </source>
</evidence>
<evidence type="ECO:0000305" key="2"/>
<accession>F8W1W9</accession>
<accession>F8VUA1</accession>